<proteinExistence type="evidence at protein level"/>
<organism>
    <name type="scientific">Homo sapiens</name>
    <name type="common">Human</name>
    <dbReference type="NCBI Taxonomy" id="9606"/>
    <lineage>
        <taxon>Eukaryota</taxon>
        <taxon>Metazoa</taxon>
        <taxon>Chordata</taxon>
        <taxon>Craniata</taxon>
        <taxon>Vertebrata</taxon>
        <taxon>Euteleostomi</taxon>
        <taxon>Mammalia</taxon>
        <taxon>Eutheria</taxon>
        <taxon>Euarchontoglires</taxon>
        <taxon>Primates</taxon>
        <taxon>Haplorrhini</taxon>
        <taxon>Catarrhini</taxon>
        <taxon>Hominidae</taxon>
        <taxon>Homo</taxon>
    </lineage>
</organism>
<keyword id="KW-0002">3D-structure</keyword>
<keyword id="KW-0025">Alternative splicing</keyword>
<keyword id="KW-0903">Direct protein sequencing</keyword>
<keyword id="KW-0325">Glycoprotein</keyword>
<keyword id="KW-1267">Proteomics identification</keyword>
<keyword id="KW-1185">Reference proteome</keyword>
<keyword id="KW-0964">Secreted</keyword>
<keyword id="KW-0732">Signal</keyword>
<protein>
    <recommendedName>
        <fullName>Dermokine</fullName>
    </recommendedName>
    <alternativeName>
        <fullName>Epidermis-specific secreted protein SK30/SK89</fullName>
    </alternativeName>
</protein>
<gene>
    <name type="primary">DMKN</name>
    <name type="ORF">UNQ729/PRO1411</name>
</gene>
<dbReference type="EMBL" id="AY622964">
    <property type="protein sequence ID" value="AAT68268.1"/>
    <property type="molecule type" value="mRNA"/>
</dbReference>
<dbReference type="EMBL" id="AY622965">
    <property type="protein sequence ID" value="AAT68269.1"/>
    <property type="molecule type" value="mRNA"/>
</dbReference>
<dbReference type="EMBL" id="AY789695">
    <property type="protein sequence ID" value="AAX48745.1"/>
    <property type="molecule type" value="mRNA"/>
</dbReference>
<dbReference type="EMBL" id="AY789696">
    <property type="protein sequence ID" value="AAX48746.1"/>
    <property type="molecule type" value="mRNA"/>
</dbReference>
<dbReference type="EMBL" id="AY789697">
    <property type="protein sequence ID" value="AAX48747.1"/>
    <property type="molecule type" value="mRNA"/>
</dbReference>
<dbReference type="EMBL" id="AY789698">
    <property type="protein sequence ID" value="AAX48748.1"/>
    <property type="molecule type" value="mRNA"/>
</dbReference>
<dbReference type="EMBL" id="AY789699">
    <property type="protein sequence ID" value="AAX48749.1"/>
    <property type="molecule type" value="mRNA"/>
</dbReference>
<dbReference type="EMBL" id="AY789700">
    <property type="protein sequence ID" value="AAX48750.1"/>
    <property type="molecule type" value="mRNA"/>
</dbReference>
<dbReference type="EMBL" id="AY789701">
    <property type="protein sequence ID" value="AAX48751.1"/>
    <property type="molecule type" value="mRNA"/>
</dbReference>
<dbReference type="EMBL" id="AY789702">
    <property type="protein sequence ID" value="AAX48752.1"/>
    <property type="molecule type" value="mRNA"/>
</dbReference>
<dbReference type="EMBL" id="AY789703">
    <property type="protein sequence ID" value="AAX48753.1"/>
    <property type="molecule type" value="mRNA"/>
</dbReference>
<dbReference type="EMBL" id="AY789704">
    <property type="protein sequence ID" value="AAX48754.1"/>
    <property type="molecule type" value="mRNA"/>
</dbReference>
<dbReference type="EMBL" id="AY789705">
    <property type="protein sequence ID" value="AAX48755.1"/>
    <property type="molecule type" value="mRNA"/>
</dbReference>
<dbReference type="EMBL" id="AY789706">
    <property type="protein sequence ID" value="AAX48756.1"/>
    <property type="molecule type" value="mRNA"/>
</dbReference>
<dbReference type="EMBL" id="AY789707">
    <property type="protein sequence ID" value="AAX48757.1"/>
    <property type="status" value="ALT_INIT"/>
    <property type="molecule type" value="mRNA"/>
</dbReference>
<dbReference type="EMBL" id="EF158319">
    <property type="protein sequence ID" value="ABN11271.1"/>
    <property type="molecule type" value="mRNA"/>
</dbReference>
<dbReference type="EMBL" id="EF158320">
    <property type="protein sequence ID" value="ABN11272.1"/>
    <property type="molecule type" value="mRNA"/>
</dbReference>
<dbReference type="EMBL" id="EF158321">
    <property type="protein sequence ID" value="ABN11273.1"/>
    <property type="molecule type" value="mRNA"/>
</dbReference>
<dbReference type="EMBL" id="EF158322">
    <property type="protein sequence ID" value="ABN11274.1"/>
    <property type="molecule type" value="mRNA"/>
</dbReference>
<dbReference type="EMBL" id="EF158323">
    <property type="protein sequence ID" value="ABN11275.1"/>
    <property type="molecule type" value="mRNA"/>
</dbReference>
<dbReference type="EMBL" id="AY358412">
    <property type="protein sequence ID" value="AAQ88778.1"/>
    <property type="molecule type" value="mRNA"/>
</dbReference>
<dbReference type="EMBL" id="AC138125">
    <property type="status" value="NOT_ANNOTATED_CDS"/>
    <property type="molecule type" value="Genomic_DNA"/>
</dbReference>
<dbReference type="EMBL" id="AD001502">
    <property type="status" value="NOT_ANNOTATED_CDS"/>
    <property type="molecule type" value="Genomic_DNA"/>
</dbReference>
<dbReference type="EMBL" id="BC004493">
    <property type="protein sequence ID" value="AAH04493.2"/>
    <property type="molecule type" value="mRNA"/>
</dbReference>
<dbReference type="EMBL" id="BC011886">
    <property type="protein sequence ID" value="AAH11886.1"/>
    <property type="molecule type" value="mRNA"/>
</dbReference>
<dbReference type="EMBL" id="BC035311">
    <property type="protein sequence ID" value="AAH35311.1"/>
    <property type="molecule type" value="mRNA"/>
</dbReference>
<dbReference type="CCDS" id="CCDS12463.1">
    <molecule id="Q6E0U4-1"/>
</dbReference>
<dbReference type="CCDS" id="CCDS42549.1">
    <molecule id="Q6E0U4-15"/>
</dbReference>
<dbReference type="CCDS" id="CCDS46051.1">
    <molecule id="Q6E0U4-8"/>
</dbReference>
<dbReference type="CCDS" id="CCDS46052.1">
    <molecule id="Q6E0U4-3"/>
</dbReference>
<dbReference type="CCDS" id="CCDS46053.1">
    <molecule id="Q6E0U4-5"/>
</dbReference>
<dbReference type="CCDS" id="CCDS46054.2">
    <molecule id="Q6E0U4-16"/>
</dbReference>
<dbReference type="CCDS" id="CCDS54250.1">
    <molecule id="Q6E0U4-4"/>
</dbReference>
<dbReference type="CCDS" id="CCDS54251.1">
    <molecule id="Q6E0U4-7"/>
</dbReference>
<dbReference type="CCDS" id="CCDS54252.1">
    <molecule id="Q6E0U4-6"/>
</dbReference>
<dbReference type="CCDS" id="CCDS86745.1">
    <molecule id="Q6E0U4-13"/>
</dbReference>
<dbReference type="RefSeq" id="NP_001030593.2">
    <molecule id="Q6E0U4-15"/>
    <property type="nucleotide sequence ID" value="NM_001035516.4"/>
</dbReference>
<dbReference type="RefSeq" id="NP_001119528.3">
    <molecule id="Q6E0U4-16"/>
    <property type="nucleotide sequence ID" value="NM_001126056.3"/>
</dbReference>
<dbReference type="RefSeq" id="NP_001119529.2">
    <molecule id="Q6E0U4-5"/>
    <property type="nucleotide sequence ID" value="NM_001126057.3"/>
</dbReference>
<dbReference type="RefSeq" id="NP_001119530.2">
    <molecule id="Q6E0U4-3"/>
    <property type="nucleotide sequence ID" value="NM_001126058.3"/>
</dbReference>
<dbReference type="RefSeq" id="NP_001119531.2">
    <molecule id="Q6E0U4-8"/>
    <property type="nucleotide sequence ID" value="NM_001126059.4"/>
</dbReference>
<dbReference type="RefSeq" id="NP_001177276.2">
    <molecule id="Q6E0U4-4"/>
    <property type="nucleotide sequence ID" value="NM_001190347.2"/>
</dbReference>
<dbReference type="RefSeq" id="NP_001177277.1">
    <molecule id="Q6E0U4-6"/>
    <property type="nucleotide sequence ID" value="NM_001190348.2"/>
</dbReference>
<dbReference type="RefSeq" id="NP_001177278.1">
    <molecule id="Q6E0U4-7"/>
    <property type="nucleotide sequence ID" value="NM_001190349.2"/>
</dbReference>
<dbReference type="RefSeq" id="NP_001295309.1">
    <property type="nucleotide sequence ID" value="NM_001308380.1"/>
</dbReference>
<dbReference type="RefSeq" id="NP_001339258.2">
    <molecule id="Q6E0U4-13"/>
    <property type="nucleotide sequence ID" value="NM_001352329.2"/>
</dbReference>
<dbReference type="RefSeq" id="NP_001339259.2">
    <molecule id="Q6E0U4-13"/>
    <property type="nucleotide sequence ID" value="NM_001352330.2"/>
</dbReference>
<dbReference type="RefSeq" id="NP_201574.3">
    <molecule id="Q6E0U4-1"/>
    <property type="nucleotide sequence ID" value="NM_033317.4"/>
</dbReference>
<dbReference type="RefSeq" id="XP_006723556.1">
    <property type="nucleotide sequence ID" value="XM_006723493.2"/>
</dbReference>
<dbReference type="RefSeq" id="XP_006723557.1">
    <property type="nucleotide sequence ID" value="XM_006723494.2"/>
</dbReference>
<dbReference type="RefSeq" id="XP_016882966.1">
    <property type="nucleotide sequence ID" value="XM_017027477.1"/>
</dbReference>
<dbReference type="RefSeq" id="XP_047295651.1">
    <molecule id="Q6E0U4-1"/>
    <property type="nucleotide sequence ID" value="XM_047439695.1"/>
</dbReference>
<dbReference type="RefSeq" id="XP_047295660.1">
    <molecule id="Q6E0U4-8"/>
    <property type="nucleotide sequence ID" value="XM_047439704.1"/>
</dbReference>
<dbReference type="PDB" id="4F20">
    <property type="method" value="X-ray"/>
    <property type="resolution" value="2.50 A"/>
    <property type="chains" value="Q=251-262"/>
</dbReference>
<dbReference type="PDBsum" id="4F20"/>
<dbReference type="SMR" id="Q6E0U4"/>
<dbReference type="BioGRID" id="125000">
    <property type="interactions" value="29"/>
</dbReference>
<dbReference type="FunCoup" id="Q6E0U4">
    <property type="interactions" value="219"/>
</dbReference>
<dbReference type="IntAct" id="Q6E0U4">
    <property type="interactions" value="19"/>
</dbReference>
<dbReference type="MINT" id="Q6E0U4"/>
<dbReference type="STRING" id="9606.ENSP00000342012"/>
<dbReference type="GlyGen" id="Q6E0U4">
    <property type="glycosylation" value="2 sites, 1 O-linked glycan (2 sites)"/>
</dbReference>
<dbReference type="iPTMnet" id="Q6E0U4"/>
<dbReference type="PhosphoSitePlus" id="Q6E0U4"/>
<dbReference type="BioMuta" id="DMKN"/>
<dbReference type="DMDM" id="290457677"/>
<dbReference type="jPOST" id="Q6E0U4"/>
<dbReference type="MassIVE" id="Q6E0U4"/>
<dbReference type="PaxDb" id="9606-ENSP00000342012"/>
<dbReference type="PeptideAtlas" id="Q6E0U4"/>
<dbReference type="ProteomicsDB" id="66258">
    <molecule id="Q6E0U4-1"/>
</dbReference>
<dbReference type="ProteomicsDB" id="66259">
    <molecule id="Q6E0U4-10"/>
</dbReference>
<dbReference type="ProteomicsDB" id="66260">
    <molecule id="Q6E0U4-11"/>
</dbReference>
<dbReference type="ProteomicsDB" id="66261">
    <molecule id="Q6E0U4-12"/>
</dbReference>
<dbReference type="ProteomicsDB" id="66262">
    <molecule id="Q6E0U4-13"/>
</dbReference>
<dbReference type="ProteomicsDB" id="66263">
    <molecule id="Q6E0U4-14"/>
</dbReference>
<dbReference type="ProteomicsDB" id="66264">
    <molecule id="Q6E0U4-15"/>
</dbReference>
<dbReference type="ProteomicsDB" id="66265">
    <molecule id="Q6E0U4-2"/>
</dbReference>
<dbReference type="ProteomicsDB" id="66266">
    <molecule id="Q6E0U4-3"/>
</dbReference>
<dbReference type="ProteomicsDB" id="66267">
    <molecule id="Q6E0U4-4"/>
</dbReference>
<dbReference type="ProteomicsDB" id="66268">
    <molecule id="Q6E0U4-5"/>
</dbReference>
<dbReference type="ProteomicsDB" id="66269">
    <molecule id="Q6E0U4-6"/>
</dbReference>
<dbReference type="ProteomicsDB" id="66270">
    <molecule id="Q6E0U4-7"/>
</dbReference>
<dbReference type="ProteomicsDB" id="66271">
    <molecule id="Q6E0U4-8"/>
</dbReference>
<dbReference type="ProteomicsDB" id="66272">
    <molecule id="Q6E0U4-9"/>
</dbReference>
<dbReference type="ProteomicsDB" id="8509"/>
<dbReference type="Antibodypedia" id="29370">
    <property type="antibodies" value="102 antibodies from 19 providers"/>
</dbReference>
<dbReference type="DNASU" id="93099"/>
<dbReference type="Ensembl" id="ENST00000339686.8">
    <molecule id="Q6E0U4-1"/>
    <property type="protein sequence ID" value="ENSP00000342012.3"/>
    <property type="gene ID" value="ENSG00000161249.21"/>
</dbReference>
<dbReference type="Ensembl" id="ENST00000408915.6">
    <molecule id="Q6E0U4-15"/>
    <property type="protein sequence ID" value="ENSP00000386225.2"/>
    <property type="gene ID" value="ENSG00000161249.21"/>
</dbReference>
<dbReference type="Ensembl" id="ENST00000414866.6">
    <molecule id="Q6E0U4-8"/>
    <property type="protein sequence ID" value="ENSP00000392222.2"/>
    <property type="gene ID" value="ENSG00000161249.21"/>
</dbReference>
<dbReference type="Ensembl" id="ENST00000418261.5">
    <molecule id="Q6E0U4-3"/>
    <property type="protein sequence ID" value="ENSP00000414743.1"/>
    <property type="gene ID" value="ENSG00000161249.21"/>
</dbReference>
<dbReference type="Ensembl" id="ENST00000419602.5">
    <molecule id="Q6E0U4-16"/>
    <property type="protein sequence ID" value="ENSP00000391036.1"/>
    <property type="gene ID" value="ENSG00000161249.21"/>
</dbReference>
<dbReference type="Ensembl" id="ENST00000424570.6">
    <molecule id="Q6E0U4-5"/>
    <property type="protein sequence ID" value="ENSP00000388404.2"/>
    <property type="gene ID" value="ENSG00000161249.21"/>
</dbReference>
<dbReference type="Ensembl" id="ENST00000429837.5">
    <molecule id="Q6E0U4-4"/>
    <property type="protein sequence ID" value="ENSP00000405503.1"/>
    <property type="gene ID" value="ENSG00000161249.21"/>
</dbReference>
<dbReference type="Ensembl" id="ENST00000447113.6">
    <molecule id="Q6E0U4-6"/>
    <property type="protein sequence ID" value="ENSP00000394908.2"/>
    <property type="gene ID" value="ENSG00000161249.21"/>
</dbReference>
<dbReference type="Ensembl" id="ENST00000451297.6">
    <molecule id="Q6E0U4-7"/>
    <property type="protein sequence ID" value="ENSP00000409513.2"/>
    <property type="gene ID" value="ENSG00000161249.21"/>
</dbReference>
<dbReference type="Ensembl" id="ENST00000472252.6">
    <molecule id="Q6E0U4-13"/>
    <property type="protein sequence ID" value="ENSP00000473341.2"/>
    <property type="gene ID" value="ENSG00000161249.21"/>
</dbReference>
<dbReference type="Ensembl" id="ENST00000492341.6">
    <molecule id="Q6E0U4-13"/>
    <property type="protein sequence ID" value="ENSP00000474419.1"/>
    <property type="gene ID" value="ENSG00000161249.21"/>
</dbReference>
<dbReference type="GeneID" id="93099"/>
<dbReference type="KEGG" id="hsa:93099"/>
<dbReference type="MANE-Select" id="ENST00000339686.8">
    <property type="protein sequence ID" value="ENSP00000342012.3"/>
    <property type="RefSeq nucleotide sequence ID" value="NM_033317.5"/>
    <property type="RefSeq protein sequence ID" value="NP_201574.4"/>
</dbReference>
<dbReference type="UCSC" id="uc002nzi.5">
    <molecule id="Q6E0U4-1"/>
    <property type="organism name" value="human"/>
</dbReference>
<dbReference type="AGR" id="HGNC:25063"/>
<dbReference type="CTD" id="93099"/>
<dbReference type="DisGeNET" id="93099"/>
<dbReference type="GeneCards" id="DMKN"/>
<dbReference type="HGNC" id="HGNC:25063">
    <property type="gene designation" value="DMKN"/>
</dbReference>
<dbReference type="HPA" id="ENSG00000161249">
    <property type="expression patterns" value="Tissue enriched (skin)"/>
</dbReference>
<dbReference type="neXtProt" id="NX_Q6E0U4"/>
<dbReference type="OpenTargets" id="ENSG00000161249"/>
<dbReference type="PharmGKB" id="PA145149020"/>
<dbReference type="VEuPathDB" id="HostDB:ENSG00000161249"/>
<dbReference type="eggNOG" id="ENOG502T1EG">
    <property type="taxonomic scope" value="Eukaryota"/>
</dbReference>
<dbReference type="GeneTree" id="ENSGT00570000079107"/>
<dbReference type="HOGENOM" id="CLU_045546_1_0_1"/>
<dbReference type="InParanoid" id="Q6E0U4"/>
<dbReference type="OMA" id="WQGMPGS"/>
<dbReference type="OrthoDB" id="9845972at2759"/>
<dbReference type="PAN-GO" id="Q6E0U4">
    <property type="GO annotations" value="2 GO annotations based on evolutionary models"/>
</dbReference>
<dbReference type="PhylomeDB" id="Q6E0U4"/>
<dbReference type="TreeFam" id="TF338112"/>
<dbReference type="PathwayCommons" id="Q6E0U4"/>
<dbReference type="Reactome" id="R-HSA-9725554">
    <property type="pathway name" value="Differentiation of Keratinocytes in Interfollicular Epidermis in Mammalian Skin"/>
</dbReference>
<dbReference type="SignaLink" id="Q6E0U4"/>
<dbReference type="BioGRID-ORCS" id="93099">
    <property type="hits" value="30 hits in 1146 CRISPR screens"/>
</dbReference>
<dbReference type="CD-CODE" id="232F8A39">
    <property type="entry name" value="P-body"/>
</dbReference>
<dbReference type="ChiTaRS" id="DMKN">
    <property type="organism name" value="human"/>
</dbReference>
<dbReference type="EvolutionaryTrace" id="Q6E0U4"/>
<dbReference type="GenomeRNAi" id="93099"/>
<dbReference type="Pharos" id="Q6E0U4">
    <property type="development level" value="Tbio"/>
</dbReference>
<dbReference type="PRO" id="PR:Q6E0U4"/>
<dbReference type="Proteomes" id="UP000005640">
    <property type="component" value="Chromosome 19"/>
</dbReference>
<dbReference type="RNAct" id="Q6E0U4">
    <property type="molecule type" value="protein"/>
</dbReference>
<dbReference type="Bgee" id="ENSG00000161249">
    <property type="expression patterns" value="Expressed in upper arm skin and 136 other cell types or tissues"/>
</dbReference>
<dbReference type="ExpressionAtlas" id="Q6E0U4">
    <property type="expression patterns" value="baseline and differential"/>
</dbReference>
<dbReference type="GO" id="GO:0005615">
    <property type="term" value="C:extracellular space"/>
    <property type="evidence" value="ECO:0000318"/>
    <property type="project" value="GO_Central"/>
</dbReference>
<dbReference type="GO" id="GO:1903575">
    <property type="term" value="P:cornified envelope assembly"/>
    <property type="evidence" value="ECO:0000318"/>
    <property type="project" value="GO_Central"/>
</dbReference>
<dbReference type="CDD" id="cd21118">
    <property type="entry name" value="dermokine"/>
    <property type="match status" value="1"/>
</dbReference>
<dbReference type="InterPro" id="IPR033541">
    <property type="entry name" value="Dermokine"/>
</dbReference>
<dbReference type="PANTHER" id="PTHR36881">
    <property type="entry name" value="DERMOKINE"/>
    <property type="match status" value="1"/>
</dbReference>
<dbReference type="PANTHER" id="PTHR36881:SF1">
    <property type="entry name" value="DERMOKINE"/>
    <property type="match status" value="1"/>
</dbReference>
<name>DMKN_HUMAN</name>
<sequence length="476" mass="47082">MKFQGPLACLLLALCLGSGEAGPLQSGEESTGTNIGEALGHGLGDALSEGVGKAIGKEAGGAAGSKVSEALGQGTREAVGTGVRQVPGFGVADALGNRVGEAAHALGNTGHEIGRQAEDVIRHGADAVRGSWQGVPGHNGAWETSGGHGIFGSQGGLGGQGQGNPGGLGTPWVHGYPGNSAGSFGMNPQGAPWGQGGNGGPPNFGTNTQGAVAQPGYGSVRASNQNEGCTNPPPSGSGGGSSNSGGGSGSQSGSSGSGSNGDNNNGSSSGGSSSGSSSGGSSGGSSGGSSGNSGGSRGDSGSESSWGSSTGSSSGNHGGSGGGNGHKPGCEKPGNEARGSGESGIQNSETSPGMFNFDTFWKNFKSKLGFINWDAINKNQVPPPSTRALLYFSRLWEDFKQNTPFLNWKAIIEGADASSLQKRAGRDDQNYNYNQHAYPTAYGGKYSVKTPAKGGVSPSSSASRVQPGLLQWVKFW</sequence>
<feature type="signal peptide" evidence="3">
    <location>
        <begin position="1"/>
        <end position="21"/>
    </location>
</feature>
<feature type="chain" id="PRO_0000330764" description="Dermokine">
    <location>
        <begin position="22"/>
        <end position="476"/>
    </location>
</feature>
<feature type="region of interest" description="Disordered" evidence="1">
    <location>
        <begin position="153"/>
        <end position="351"/>
    </location>
</feature>
<feature type="compositionally biased region" description="Gly residues" evidence="1">
    <location>
        <begin position="153"/>
        <end position="169"/>
    </location>
</feature>
<feature type="compositionally biased region" description="Gly residues" evidence="1">
    <location>
        <begin position="193"/>
        <end position="202"/>
    </location>
</feature>
<feature type="compositionally biased region" description="Gly residues" evidence="1">
    <location>
        <begin position="236"/>
        <end position="259"/>
    </location>
</feature>
<feature type="compositionally biased region" description="Gly residues" evidence="1">
    <location>
        <begin position="268"/>
        <end position="298"/>
    </location>
</feature>
<feature type="compositionally biased region" description="Low complexity" evidence="1">
    <location>
        <begin position="299"/>
        <end position="315"/>
    </location>
</feature>
<feature type="compositionally biased region" description="Gly residues" evidence="1">
    <location>
        <begin position="316"/>
        <end position="326"/>
    </location>
</feature>
<feature type="splice variant" id="VSP_033087" description="In isoform 15." evidence="12">
    <location>
        <begin position="1"/>
        <end position="388"/>
    </location>
</feature>
<feature type="splice variant" id="VSP_033088" description="In isoform 13 and isoform 14." evidence="9 10">
    <location>
        <begin position="1"/>
        <end position="353"/>
    </location>
</feature>
<feature type="splice variant" id="VSP_033089" description="In isoform 11 and isoform 12." evidence="10">
    <location>
        <begin position="1"/>
        <end position="344"/>
    </location>
</feature>
<feature type="splice variant" id="VSP_033090" description="In isoform 10." evidence="10">
    <location>
        <begin position="1"/>
        <end position="324"/>
    </location>
</feature>
<feature type="splice variant" id="VSP_033091" description="In isoform 9." evidence="10">
    <location>
        <begin position="1"/>
        <end position="306"/>
    </location>
</feature>
<feature type="splice variant" id="VSP_033092" description="In isoform 8." evidence="11">
    <location>
        <begin position="1"/>
        <end position="287"/>
    </location>
</feature>
<feature type="splice variant" id="VSP_033093" description="In isoform 2." evidence="11">
    <original>GSGSQSGSSGSGSNGDNNNGSSSGGSSSGSSSGGSSGGSSGGSSGNSGGSRGDSGSESSWGSSTGSSSGNHGGSGGGNGHKPGCEKPGNEARGSGESGIQ</original>
    <variation>SSTGSSSGNHGGSGGGNGHKPGCEKPGNEARGSGESGIQGFRGPGSFPXNMREISKEGNRLLGGSGDNYRGQGSSWGSGGGDAVGGVNTV</variation>
    <location>
        <begin position="247"/>
        <end position="346"/>
    </location>
</feature>
<feature type="splice variant" id="VSP_033094" description="In isoform 4 and isoform 16." evidence="11">
    <location>
        <begin position="247"/>
        <end position="307"/>
    </location>
</feature>
<feature type="splice variant" id="VSP_033095" description="In isoform 8." evidence="11">
    <original>GSSGNSGGSRGDSGSESSW</original>
    <variation>MLGITSCSDQQAKEGEGLE</variation>
    <location>
        <begin position="288"/>
        <end position="306"/>
    </location>
</feature>
<feature type="splice variant" id="VSP_033096" description="In isoform 9." evidence="10">
    <original>GSSTGSSSGNHGGSGGGNGHKPGCEKPGNEARGSGESGIQ</original>
    <variation>MSPPDQGVVESRLWRQMLHKGQGSSWGSGGGDAVGGVNTV</variation>
    <location>
        <begin position="307"/>
        <end position="346"/>
    </location>
</feature>
<feature type="splice variant" id="VSP_033097" description="In isoform 10." evidence="10">
    <original>GHKPGCEKPGNEARGSGESGIQ</original>
    <variation>MRGQGSSWGSGGGDAVGGVNTV</variation>
    <location>
        <begin position="325"/>
        <end position="346"/>
    </location>
</feature>
<feature type="splice variant" id="VSP_033098" description="In isoform 7." evidence="11">
    <location>
        <begin position="330"/>
        <end position="346"/>
    </location>
</feature>
<feature type="splice variant" id="VSP_033099" description="In isoform 11 and isoform 12." evidence="10">
    <original>IQ</original>
    <variation>MR</variation>
    <location>
        <begin position="345"/>
        <end position="346"/>
    </location>
</feature>
<feature type="splice variant" id="VSP_047249" description="In isoform 16." evidence="12">
    <original>Q</original>
    <variation>QGFRGQGVSSNMREISKEGNRLLGGSGDNYRGQGSSWGSGGGDAVGGVNTV</variation>
    <location>
        <position position="346"/>
    </location>
</feature>
<feature type="splice variant" id="VSP_033100" description="In isoform 4." evidence="11">
    <original>Q</original>
    <variation>QGQGSSWGSGGGDAVGGVNTV</variation>
    <location>
        <position position="346"/>
    </location>
</feature>
<feature type="splice variant" id="VSP_033101" description="In isoform 5." evidence="10">
    <original>Q</original>
    <variation>QGFRGQGVSSNMR</variation>
    <location>
        <position position="346"/>
    </location>
</feature>
<feature type="splice variant" id="VSP_033102" description="In isoform 6." evidence="8">
    <original>NSETSPGMFNFDTFWKNFKSKLGFINWDAINKNQVPPPSTRALLYFSRLWEDFKQNTPFLNWKAIIEGADASSLQKRAGRDDQNYNYNQHAYPTAYGGKYSVKTPAKGGVSPSSSASRVQPGLLQWVKFW</original>
    <variation>GFRGQGVSSNMREISKEGNRLLGGSGDNYRGQGSSWGSGGGDAVGGVNTVNSETSPGMFNFDTFWKNFKSKLGFINWDAINKDQRSSRIP</variation>
    <location>
        <begin position="347"/>
        <end position="476"/>
    </location>
</feature>
<feature type="splice variant" id="VSP_033103" description="In isoform 3, isoform 5 and isoform 7." evidence="10 11">
    <original>NQVPPPST</original>
    <variation>DQRSSRIP</variation>
    <location>
        <begin position="379"/>
        <end position="386"/>
    </location>
</feature>
<feature type="splice variant" id="VSP_033104" description="In isoform 3, isoform 5 and isoform 7." evidence="10 11">
    <location>
        <begin position="387"/>
        <end position="476"/>
    </location>
</feature>
<feature type="splice variant" id="VSP_033105" description="In isoform 15." evidence="12">
    <original>LLYFSRLWEDFKQNTPFLNWKAIIE</original>
    <variation>MNMKPATASALLLLLLGLAWTQGSHGW</variation>
    <location>
        <begin position="389"/>
        <end position="413"/>
    </location>
</feature>
<feature type="splice variant" id="VSP_033106" description="In isoform 4, isoform 12 and isoform 14." evidence="9 10 11">
    <original>Q</original>
    <variation>QPGAGWQEVAAVTSK</variation>
    <location>
        <position position="429"/>
    </location>
</feature>
<feature type="sequence variant" id="VAR_042720" description="In a colorectal cancer sample; somatic mutation." evidence="6">
    <original>A</original>
    <variation>D</variation>
    <location>
        <position position="13"/>
    </location>
</feature>
<feature type="sequence variant" id="VAR_056865" description="In dbSNP:rs12460932.">
    <original>E</original>
    <variation>D</variation>
    <location>
        <position position="69"/>
    </location>
</feature>
<feature type="sequence variant" id="VAR_059652" description="In dbSNP:rs4806163." evidence="2 3 4 5 7">
    <original>V</original>
    <variation>A</variation>
    <location>
        <position position="91"/>
    </location>
</feature>
<feature type="sequence variant" id="VAR_056866" description="In dbSNP:rs7247001." evidence="2">
    <original>N</original>
    <variation>S</variation>
    <location>
        <position position="139"/>
    </location>
</feature>
<feature type="sequence variant" id="VAR_059653" description="In dbSNP:rs11667007." evidence="7">
    <original>G</original>
    <variation>S</variation>
    <location>
        <position position="280"/>
    </location>
</feature>
<feature type="sequence variant" id="VAR_042721" description="In dbSNP:rs2293696.">
    <original>A</original>
    <variation>S</variation>
    <location>
        <position position="415"/>
    </location>
</feature>
<feature type="sequence variant" id="VAR_047337" description="In dbSNP:rs909072." evidence="3 4 5 7">
    <original>D</original>
    <variation>A</variation>
    <location>
        <position position="427"/>
    </location>
</feature>
<feature type="sequence conflict" description="In Ref. 3; ABN11271/ABN11272." evidence="12" ref="3">
    <original>H</original>
    <variation>R</variation>
    <location>
        <position position="111"/>
    </location>
</feature>
<feature type="sequence conflict" description="In Ref. 3; ABN11273." evidence="12" ref="3">
    <original>N</original>
    <variation>D</variation>
    <location>
        <position position="198"/>
    </location>
</feature>
<feature type="sequence conflict" description="In Ref. 3; ABN11273." evidence="12" ref="3">
    <original>QP</original>
    <variation>PA</variation>
    <location>
        <begin position="214"/>
        <end position="215"/>
    </location>
</feature>
<feature type="sequence conflict" description="In Ref. 3; ABN11273/ABN11274." evidence="12" ref="3">
    <location>
        <position position="271"/>
    </location>
</feature>
<feature type="sequence conflict" description="In Ref. 4; AAQ88778." evidence="12" ref="4">
    <original>G</original>
    <variation>GSSSG</variation>
    <location>
        <position position="279"/>
    </location>
</feature>
<feature type="sequence conflict" description="In Ref. 3; ABN11272." evidence="12" ref="3">
    <original>K</original>
    <variation>M</variation>
    <location>
        <position position="378"/>
    </location>
</feature>
<feature type="sequence conflict" description="In Ref. 3; ABN11272." evidence="12" ref="3">
    <original>S</original>
    <variation>L</variation>
    <location>
        <position position="419"/>
    </location>
</feature>
<feature type="sequence conflict" description="In Ref. 3; ABN11272." evidence="12" ref="3">
    <original>T</original>
    <variation>S</variation>
    <location>
        <position position="450"/>
    </location>
</feature>
<feature type="strand" evidence="13">
    <location>
        <begin position="254"/>
        <end position="259"/>
    </location>
</feature>
<comment type="function">
    <text evidence="12">May act as a soluble regulator of keratinocyte differentiation.</text>
</comment>
<comment type="subunit">
    <text evidence="7">Homooligomer. Seems to be able to homodimerize and homotrimerize.</text>
</comment>
<comment type="interaction">
    <interactant intactId="EBI-7943171">
        <id>Q6E0U4</id>
    </interactant>
    <interactant intactId="EBI-10988864">
        <id>P46379-2</id>
        <label>BAG6</label>
    </interactant>
    <organismsDiffer>false</organismsDiffer>
    <experiments>3</experiments>
</comment>
<comment type="interaction">
    <interactant intactId="EBI-7943171">
        <id>Q6E0U4</id>
    </interactant>
    <interactant intactId="EBI-9304251">
        <id>Q05329</id>
        <label>GAD2</label>
    </interactant>
    <organismsDiffer>false</organismsDiffer>
    <experiments>3</experiments>
</comment>
<comment type="interaction">
    <interactant intactId="EBI-7943171">
        <id>Q6E0U4</id>
    </interactant>
    <interactant intactId="EBI-354921">
        <id>P11021</id>
        <label>HSPA5</label>
    </interactant>
    <organismsDiffer>false</organismsDiffer>
    <experiments>3</experiments>
</comment>
<comment type="interaction">
    <interactant intactId="EBI-7943171">
        <id>Q6E0U4</id>
    </interactant>
    <interactant intactId="EBI-347996">
        <id>O43765</id>
        <label>SGTA</label>
    </interactant>
    <organismsDiffer>false</organismsDiffer>
    <experiments>3</experiments>
</comment>
<comment type="interaction">
    <interactant intactId="EBI-7943171">
        <id>Q6E0U4</id>
    </interactant>
    <interactant intactId="EBI-744081">
        <id>Q96EQ0</id>
        <label>SGTB</label>
    </interactant>
    <organismsDiffer>false</organismsDiffer>
    <experiments>3</experiments>
</comment>
<comment type="interaction">
    <interactant intactId="EBI-7943171">
        <id>Q6E0U4</id>
    </interactant>
    <interactant intactId="EBI-741480">
        <id>Q9UMX0</id>
        <label>UBQLN1</label>
    </interactant>
    <organismsDiffer>false</organismsDiffer>
    <experiments>3</experiments>
</comment>
<comment type="interaction">
    <interactant intactId="EBI-7943171">
        <id>Q6E0U4</id>
    </interactant>
    <interactant intactId="EBI-947187">
        <id>Q9UHD9</id>
        <label>UBQLN2</label>
    </interactant>
    <organismsDiffer>false</organismsDiffer>
    <experiments>3</experiments>
</comment>
<comment type="subcellular location">
    <subcellularLocation>
        <location evidence="3">Secreted</location>
    </subcellularLocation>
</comment>
<comment type="alternative products">
    <event type="alternative splicing"/>
    <isoform>
        <id>Q6E0U4-1</id>
        <name>1</name>
        <name>Dermokine beta</name>
        <sequence type="displayed"/>
    </isoform>
    <isoform>
        <id>Q6E0U4-2</id>
        <name>2</name>
        <name>Dermokine beta-2</name>
        <sequence type="described" ref="VSP_033093"/>
    </isoform>
    <isoform>
        <id>Q6E0U4-3</id>
        <name>3</name>
        <name>Dermokine-gamma 1</name>
        <name>Dermokine gamma-2</name>
        <sequence type="described" ref="VSP_033103 VSP_033104"/>
    </isoform>
    <isoform>
        <id>Q6E0U4-4</id>
        <name>4</name>
        <name>Dermokine beta-1</name>
        <sequence type="described" ref="VSP_033094 VSP_033100 VSP_033106"/>
    </isoform>
    <isoform>
        <id>Q6E0U4-5</id>
        <name>5</name>
        <name>Dermokine gamma-2</name>
        <sequence type="described" ref="VSP_033101 VSP_033103 VSP_033104"/>
    </isoform>
    <isoform>
        <id>Q6E0U4-6</id>
        <name>6</name>
        <sequence type="described" ref="VSP_033102"/>
    </isoform>
    <isoform>
        <id>Q6E0U4-7</id>
        <name>7</name>
        <name>Dermokine gamma-1</name>
        <sequence type="described" ref="VSP_033098 VSP_033103 VSP_033104"/>
    </isoform>
    <isoform>
        <id>Q6E0U4-8</id>
        <name>8</name>
        <name>Dermokine delta</name>
        <sequence type="described" ref="VSP_033092 VSP_033095"/>
    </isoform>
    <isoform>
        <id>Q6E0U4-9</id>
        <name>9</name>
        <name>Dermokine-delta-4</name>
        <sequence type="described" ref="VSP_033091 VSP_033096"/>
    </isoform>
    <isoform>
        <id>Q6E0U4-10</id>
        <name>10</name>
        <name>Dermokine-delta-1</name>
        <sequence type="described" ref="VSP_033090 VSP_033097"/>
    </isoform>
    <isoform>
        <id>Q6E0U4-11</id>
        <name>11</name>
        <name>Dermokine-delta-3</name>
        <sequence type="described" ref="VSP_033089 VSP_033099"/>
    </isoform>
    <isoform>
        <id>Q6E0U4-12</id>
        <name>12</name>
        <name>Dermokine-delta-2</name>
        <sequence type="described" ref="VSP_033089 VSP_033099 VSP_033106"/>
    </isoform>
    <isoform>
        <id>Q6E0U4-13</id>
        <name>13</name>
        <name>Dermokine-delta-6</name>
        <sequence type="described" ref="VSP_033088"/>
    </isoform>
    <isoform>
        <id>Q6E0U4-14</id>
        <name>14</name>
        <name>Dermokine-delta-5</name>
        <sequence type="described" ref="VSP_033088 VSP_033106"/>
    </isoform>
    <isoform>
        <id>Q6E0U4-15</id>
        <name>15</name>
        <name>Dermokine-alpha</name>
        <sequence type="described" ref="VSP_033087 VSP_033105"/>
    </isoform>
    <isoform>
        <id>Q6E0U4-16</id>
        <name>16</name>
        <sequence type="described" ref="VSP_033094 VSP_047249"/>
    </isoform>
</comment>
<comment type="tissue specificity">
    <text evidence="5 7">Expressed in epidermis; in the spinous and granular layers and in placenta. Also found in the epithelia of the small intestine, macrophages of the lung and endothelial cells of the lung. Isoform 15 is expressed in epidermis and placenta. Isoform 1 is expressed in epidermis.</text>
</comment>
<comment type="PTM">
    <text evidence="7">O-glycosylated.</text>
</comment>
<comment type="similarity">
    <text evidence="12">Belongs to the dermokine family.</text>
</comment>
<comment type="sequence caution" evidence="12">
    <conflict type="erroneous initiation">
        <sequence resource="EMBL-CDS" id="AAX48757"/>
    </conflict>
</comment>
<evidence type="ECO:0000256" key="1">
    <source>
        <dbReference type="SAM" id="MobiDB-lite"/>
    </source>
</evidence>
<evidence type="ECO:0000269" key="2">
    <source>
    </source>
</evidence>
<evidence type="ECO:0000269" key="3">
    <source>
    </source>
</evidence>
<evidence type="ECO:0000269" key="4">
    <source>
    </source>
</evidence>
<evidence type="ECO:0000269" key="5">
    <source>
    </source>
</evidence>
<evidence type="ECO:0000269" key="6">
    <source>
    </source>
</evidence>
<evidence type="ECO:0000269" key="7">
    <source>
    </source>
</evidence>
<evidence type="ECO:0000303" key="8">
    <source>
    </source>
</evidence>
<evidence type="ECO:0000303" key="9">
    <source>
    </source>
</evidence>
<evidence type="ECO:0000303" key="10">
    <source>
    </source>
</evidence>
<evidence type="ECO:0000303" key="11">
    <source>
    </source>
</evidence>
<evidence type="ECO:0000305" key="12"/>
<evidence type="ECO:0007829" key="13">
    <source>
        <dbReference type="PDB" id="4F20"/>
    </source>
</evidence>
<accession>Q6E0U4</accession>
<accession>A3EZ79</accession>
<accession>A3EZ80</accession>
<accession>A3EZ81</accession>
<accession>A3EZ82</accession>
<accession>A3EZ83</accession>
<accession>C9J4P6</accession>
<accession>C9J5N8</accession>
<accession>C9JAL3</accession>
<accession>Q32W58</accession>
<accession>Q32W62</accession>
<accession>Q32W63</accession>
<accession>Q32W64</accession>
<accession>Q32W65</accession>
<accession>Q32W66</accession>
<accession>Q32W67</accession>
<accession>Q6E0U5</accession>
<accession>Q6UXC7</accession>
<accession>Q96EW8</accession>
<accession>Q9BSY6</accession>
<reference key="1">
    <citation type="journal article" date="2004" name="Genomics">
        <title>Identification of novel keratinocyte-secreted peptides dermokine-alpha/-beta and a new stratified epithelium-secreted protein gene complex on human chromosome 19q13.1.</title>
        <authorList>
            <person name="Matsui T."/>
            <person name="Hayashi-Kisumi F."/>
            <person name="Kinoshita Y."/>
            <person name="Katahira S."/>
            <person name="Morita K."/>
            <person name="Miyachi Y."/>
            <person name="Ono Y."/>
            <person name="Imai T."/>
            <person name="Tanigawa Y."/>
            <person name="Komiya T."/>
            <person name="Tsukita S."/>
        </authorList>
    </citation>
    <scope>NUCLEOTIDE SEQUENCE [MRNA] (ISOFORM 1)</scope>
    <scope>PARTIAL NUCLEOTIDE SEQUENCE [MRNA] (ISOFORM 15)</scope>
    <scope>PROTEIN SEQUENCE OF 22-26</scope>
    <scope>SUBCELLULAR LOCATION</scope>
    <scope>VARIANTS ALA-91 AND ALA-427</scope>
</reference>
<reference key="2">
    <citation type="journal article" date="2006" name="J. Invest. Dermatol.">
        <title>The human dermokine gene: description of novel isoforms with different tissue-specific expression and subcellular location.</title>
        <authorList>
            <person name="Toulza E."/>
            <person name="Galliano M.F."/>
            <person name="Jonca N."/>
            <person name="Gallinaro H."/>
            <person name="Mechin M.C."/>
            <person name="Ishida-Yamamoto A."/>
            <person name="Serre G."/>
            <person name="Guerrin M."/>
        </authorList>
    </citation>
    <scope>NUCLEOTIDE SEQUENCE [MRNA] (ISOFORMS 1; 3; 5; 9; 10; 11; 12; 13 AND 14)</scope>
    <scope>PARTIAL NUCLEOTIDE SEQUENCE [MRNA] (ISOFORM 15)</scope>
    <scope>TISSUE SPECIFICITY</scope>
    <scope>VARIANTS ALA-91 AND ALA-427</scope>
    <source>
        <tissue>Epidermis</tissue>
    </source>
</reference>
<reference key="3">
    <citation type="journal article" date="2007" name="J. Invest. Dermatol.">
        <title>Dermokine: an extensively differentially spliced gene expressed in epithelial cells.</title>
        <authorList>
            <person name="Naso M.F."/>
            <person name="Liang B."/>
            <person name="Huang C.C."/>
            <person name="Song X.-Y."/>
            <person name="Shahied-Arruda L."/>
            <person name="Belkowski S.M."/>
            <person name="D'Andrea M.R."/>
            <person name="Polkovitch D.A."/>
            <person name="Lawrence D.R."/>
            <person name="Griswold D.E."/>
            <person name="Sweet R.W."/>
            <person name="Amegadzie B.Y."/>
        </authorList>
    </citation>
    <scope>NUCLEOTIDE SEQUENCE [MRNA] (ISOFORMS 2; 3; 4; 7 AND 8)</scope>
    <scope>TISSUE SPECIFICITY</scope>
    <scope>GLYCOSYLATION</scope>
    <scope>SUBUNIT</scope>
    <scope>VARIANTS ALA-91; SER-280 AND ALA-427</scope>
</reference>
<reference key="4">
    <citation type="journal article" date="2003" name="Genome Res.">
        <title>The secreted protein discovery initiative (SPDI), a large-scale effort to identify novel human secreted and transmembrane proteins: a bioinformatics assessment.</title>
        <authorList>
            <person name="Clark H.F."/>
            <person name="Gurney A.L."/>
            <person name="Abaya E."/>
            <person name="Baker K."/>
            <person name="Baldwin D.T."/>
            <person name="Brush J."/>
            <person name="Chen J."/>
            <person name="Chow B."/>
            <person name="Chui C."/>
            <person name="Crowley C."/>
            <person name="Currell B."/>
            <person name="Deuel B."/>
            <person name="Dowd P."/>
            <person name="Eaton D."/>
            <person name="Foster J.S."/>
            <person name="Grimaldi C."/>
            <person name="Gu Q."/>
            <person name="Hass P.E."/>
            <person name="Heldens S."/>
            <person name="Huang A."/>
            <person name="Kim H.S."/>
            <person name="Klimowski L."/>
            <person name="Jin Y."/>
            <person name="Johnson S."/>
            <person name="Lee J."/>
            <person name="Lewis L."/>
            <person name="Liao D."/>
            <person name="Mark M.R."/>
            <person name="Robbie E."/>
            <person name="Sanchez C."/>
            <person name="Schoenfeld J."/>
            <person name="Seshagiri S."/>
            <person name="Simmons L."/>
            <person name="Singh J."/>
            <person name="Smith V."/>
            <person name="Stinson J."/>
            <person name="Vagts A."/>
            <person name="Vandlen R.L."/>
            <person name="Watanabe C."/>
            <person name="Wieand D."/>
            <person name="Woods K."/>
            <person name="Xie M.-H."/>
            <person name="Yansura D.G."/>
            <person name="Yi S."/>
            <person name="Yu G."/>
            <person name="Yuan J."/>
            <person name="Zhang M."/>
            <person name="Zhang Z."/>
            <person name="Goddard A.D."/>
            <person name="Wood W.I."/>
            <person name="Godowski P.J."/>
            <person name="Gray A.M."/>
        </authorList>
    </citation>
    <scope>NUCLEOTIDE SEQUENCE [LARGE SCALE MRNA] (ISOFORM 6)</scope>
    <scope>VARIANTS ALA-91 AND SER-139</scope>
</reference>
<reference key="5">
    <citation type="journal article" date="2004" name="Nature">
        <title>The DNA sequence and biology of human chromosome 19.</title>
        <authorList>
            <person name="Grimwood J."/>
            <person name="Gordon L.A."/>
            <person name="Olsen A.S."/>
            <person name="Terry A."/>
            <person name="Schmutz J."/>
            <person name="Lamerdin J.E."/>
            <person name="Hellsten U."/>
            <person name="Goodstein D."/>
            <person name="Couronne O."/>
            <person name="Tran-Gyamfi M."/>
            <person name="Aerts A."/>
            <person name="Altherr M."/>
            <person name="Ashworth L."/>
            <person name="Bajorek E."/>
            <person name="Black S."/>
            <person name="Branscomb E."/>
            <person name="Caenepeel S."/>
            <person name="Carrano A.V."/>
            <person name="Caoile C."/>
            <person name="Chan Y.M."/>
            <person name="Christensen M."/>
            <person name="Cleland C.A."/>
            <person name="Copeland A."/>
            <person name="Dalin E."/>
            <person name="Dehal P."/>
            <person name="Denys M."/>
            <person name="Detter J.C."/>
            <person name="Escobar J."/>
            <person name="Flowers D."/>
            <person name="Fotopulos D."/>
            <person name="Garcia C."/>
            <person name="Georgescu A.M."/>
            <person name="Glavina T."/>
            <person name="Gomez M."/>
            <person name="Gonzales E."/>
            <person name="Groza M."/>
            <person name="Hammon N."/>
            <person name="Hawkins T."/>
            <person name="Haydu L."/>
            <person name="Ho I."/>
            <person name="Huang W."/>
            <person name="Israni S."/>
            <person name="Jett J."/>
            <person name="Kadner K."/>
            <person name="Kimball H."/>
            <person name="Kobayashi A."/>
            <person name="Larionov V."/>
            <person name="Leem S.-H."/>
            <person name="Lopez F."/>
            <person name="Lou Y."/>
            <person name="Lowry S."/>
            <person name="Malfatti S."/>
            <person name="Martinez D."/>
            <person name="McCready P.M."/>
            <person name="Medina C."/>
            <person name="Morgan J."/>
            <person name="Nelson K."/>
            <person name="Nolan M."/>
            <person name="Ovcharenko I."/>
            <person name="Pitluck S."/>
            <person name="Pollard M."/>
            <person name="Popkie A.P."/>
            <person name="Predki P."/>
            <person name="Quan G."/>
            <person name="Ramirez L."/>
            <person name="Rash S."/>
            <person name="Retterer J."/>
            <person name="Rodriguez A."/>
            <person name="Rogers S."/>
            <person name="Salamov A."/>
            <person name="Salazar A."/>
            <person name="She X."/>
            <person name="Smith D."/>
            <person name="Slezak T."/>
            <person name="Solovyev V."/>
            <person name="Thayer N."/>
            <person name="Tice H."/>
            <person name="Tsai M."/>
            <person name="Ustaszewska A."/>
            <person name="Vo N."/>
            <person name="Wagner M."/>
            <person name="Wheeler J."/>
            <person name="Wu K."/>
            <person name="Xie G."/>
            <person name="Yang J."/>
            <person name="Dubchak I."/>
            <person name="Furey T.S."/>
            <person name="DeJong P."/>
            <person name="Dickson M."/>
            <person name="Gordon D."/>
            <person name="Eichler E.E."/>
            <person name="Pennacchio L.A."/>
            <person name="Richardson P."/>
            <person name="Stubbs L."/>
            <person name="Rokhsar D.S."/>
            <person name="Myers R.M."/>
            <person name="Rubin E.M."/>
            <person name="Lucas S.M."/>
        </authorList>
    </citation>
    <scope>NUCLEOTIDE SEQUENCE [LARGE SCALE GENOMIC DNA]</scope>
</reference>
<reference key="6">
    <citation type="journal article" date="2004" name="Genome Res.">
        <title>The status, quality, and expansion of the NIH full-length cDNA project: the Mammalian Gene Collection (MGC).</title>
        <authorList>
            <consortium name="The MGC Project Team"/>
        </authorList>
    </citation>
    <scope>NUCLEOTIDE SEQUENCE [LARGE SCALE MRNA] (ISOFORMS 1 AND 14)</scope>
    <scope>VARIANTS ALA-91 AND ALA-427</scope>
    <source>
        <tissue>Skin</tissue>
        <tissue>Uterus</tissue>
    </source>
</reference>
<reference key="7">
    <citation type="journal article" date="2006" name="Science">
        <title>The consensus coding sequences of human breast and colorectal cancers.</title>
        <authorList>
            <person name="Sjoeblom T."/>
            <person name="Jones S."/>
            <person name="Wood L.D."/>
            <person name="Parsons D.W."/>
            <person name="Lin J."/>
            <person name="Barber T.D."/>
            <person name="Mandelker D."/>
            <person name="Leary R.J."/>
            <person name="Ptak J."/>
            <person name="Silliman N."/>
            <person name="Szabo S."/>
            <person name="Buckhaults P."/>
            <person name="Farrell C."/>
            <person name="Meeh P."/>
            <person name="Markowitz S.D."/>
            <person name="Willis J."/>
            <person name="Dawson D."/>
            <person name="Willson J.K.V."/>
            <person name="Gazdar A.F."/>
            <person name="Hartigan J."/>
            <person name="Wu L."/>
            <person name="Liu C."/>
            <person name="Parmigiani G."/>
            <person name="Park B.H."/>
            <person name="Bachman K.E."/>
            <person name="Papadopoulos N."/>
            <person name="Vogelstein B."/>
            <person name="Kinzler K.W."/>
            <person name="Velculescu V.E."/>
        </authorList>
    </citation>
    <scope>VARIANT [LARGE SCALE ANALYSIS] ASP-13</scope>
</reference>